<sequence length="330" mass="36637">MKTAYIAKQRQISFVKSHFSRQLEERLGLIEVQAPILSRVGDGTQDNLSGCEKAVQVKVKALPDAQFEVVHSLAKWKRQTLGQHDFSAGEGLYTHMKALRPDEDRLSPLHSVYVDQWDWERVMGDGERQFSTLKSTVEAIWGGIKATEAAVSEEFGLAPFLPDQIHFVHSQELLSRYPDLDAKGRERAIAKDLGAVFLVGIGGKLSDGHRHDVRAPDYDDWSTPSELGHAGLNGDILVWNPVLEDAFELSSMGIRVDADTLKHQLALTGDEDRLELEWHQALLRGEMPQTIGGGIGQSRLTMLLLQLPHIGQVQCGVWPAAVRESVPSLL</sequence>
<feature type="chain" id="PRO_1000146692" description="Aspartate--ammonia ligase">
    <location>
        <begin position="1"/>
        <end position="330"/>
    </location>
</feature>
<proteinExistence type="inferred from homology"/>
<protein>
    <recommendedName>
        <fullName evidence="1">Aspartate--ammonia ligase</fullName>
        <ecNumber evidence="1">6.3.1.1</ecNumber>
    </recommendedName>
    <alternativeName>
        <fullName evidence="1">Asparagine synthetase A</fullName>
    </alternativeName>
</protein>
<accession>B7UMK9</accession>
<name>ASNA_ECO27</name>
<gene>
    <name evidence="1" type="primary">asnA</name>
    <name type="ordered locus">E2348C_4054</name>
</gene>
<dbReference type="EC" id="6.3.1.1" evidence="1"/>
<dbReference type="EMBL" id="FM180568">
    <property type="protein sequence ID" value="CAS11602.1"/>
    <property type="molecule type" value="Genomic_DNA"/>
</dbReference>
<dbReference type="RefSeq" id="WP_000845130.1">
    <property type="nucleotide sequence ID" value="NC_011601.1"/>
</dbReference>
<dbReference type="SMR" id="B7UMK9"/>
<dbReference type="KEGG" id="ecg:E2348C_4054"/>
<dbReference type="HOGENOM" id="CLU_071543_0_0_6"/>
<dbReference type="UniPathway" id="UPA00134">
    <property type="reaction ID" value="UER00194"/>
</dbReference>
<dbReference type="Proteomes" id="UP000008205">
    <property type="component" value="Chromosome"/>
</dbReference>
<dbReference type="GO" id="GO:0005829">
    <property type="term" value="C:cytosol"/>
    <property type="evidence" value="ECO:0007669"/>
    <property type="project" value="TreeGrafter"/>
</dbReference>
<dbReference type="GO" id="GO:0004071">
    <property type="term" value="F:aspartate-ammonia ligase activity"/>
    <property type="evidence" value="ECO:0007669"/>
    <property type="project" value="UniProtKB-UniRule"/>
</dbReference>
<dbReference type="GO" id="GO:0005524">
    <property type="term" value="F:ATP binding"/>
    <property type="evidence" value="ECO:0007669"/>
    <property type="project" value="UniProtKB-UniRule"/>
</dbReference>
<dbReference type="GO" id="GO:0070981">
    <property type="term" value="P:L-asparagine biosynthetic process"/>
    <property type="evidence" value="ECO:0007669"/>
    <property type="project" value="UniProtKB-UniRule"/>
</dbReference>
<dbReference type="CDD" id="cd00645">
    <property type="entry name" value="AsnA"/>
    <property type="match status" value="1"/>
</dbReference>
<dbReference type="FunFam" id="3.30.930.10:FF:000025">
    <property type="entry name" value="Aspartate--ammonia ligase"/>
    <property type="match status" value="1"/>
</dbReference>
<dbReference type="Gene3D" id="3.30.930.10">
    <property type="entry name" value="Bira Bifunctional Protein, Domain 2"/>
    <property type="match status" value="1"/>
</dbReference>
<dbReference type="HAMAP" id="MF_00555">
    <property type="entry name" value="AsnA"/>
    <property type="match status" value="1"/>
</dbReference>
<dbReference type="InterPro" id="IPR006195">
    <property type="entry name" value="aa-tRNA-synth_II"/>
</dbReference>
<dbReference type="InterPro" id="IPR045864">
    <property type="entry name" value="aa-tRNA-synth_II/BPL/LPL"/>
</dbReference>
<dbReference type="InterPro" id="IPR004618">
    <property type="entry name" value="AsnA"/>
</dbReference>
<dbReference type="NCBIfam" id="TIGR00669">
    <property type="entry name" value="asnA"/>
    <property type="match status" value="1"/>
</dbReference>
<dbReference type="PANTHER" id="PTHR30073">
    <property type="entry name" value="ASPARTATE--AMMONIA LIGASE"/>
    <property type="match status" value="1"/>
</dbReference>
<dbReference type="PANTHER" id="PTHR30073:SF5">
    <property type="entry name" value="ASPARTATE--AMMONIA LIGASE"/>
    <property type="match status" value="1"/>
</dbReference>
<dbReference type="Pfam" id="PF03590">
    <property type="entry name" value="AsnA"/>
    <property type="match status" value="1"/>
</dbReference>
<dbReference type="PIRSF" id="PIRSF001555">
    <property type="entry name" value="Asp_ammon_ligase"/>
    <property type="match status" value="1"/>
</dbReference>
<dbReference type="SUPFAM" id="SSF55681">
    <property type="entry name" value="Class II aaRS and biotin synthetases"/>
    <property type="match status" value="1"/>
</dbReference>
<dbReference type="PROSITE" id="PS50862">
    <property type="entry name" value="AA_TRNA_LIGASE_II"/>
    <property type="match status" value="1"/>
</dbReference>
<evidence type="ECO:0000255" key="1">
    <source>
        <dbReference type="HAMAP-Rule" id="MF_00555"/>
    </source>
</evidence>
<keyword id="KW-0028">Amino-acid biosynthesis</keyword>
<keyword id="KW-0061">Asparagine biosynthesis</keyword>
<keyword id="KW-0067">ATP-binding</keyword>
<keyword id="KW-0963">Cytoplasm</keyword>
<keyword id="KW-0436">Ligase</keyword>
<keyword id="KW-0547">Nucleotide-binding</keyword>
<keyword id="KW-1185">Reference proteome</keyword>
<comment type="catalytic activity">
    <reaction evidence="1">
        <text>L-aspartate + NH4(+) + ATP = L-asparagine + AMP + diphosphate + H(+)</text>
        <dbReference type="Rhea" id="RHEA:11372"/>
        <dbReference type="ChEBI" id="CHEBI:15378"/>
        <dbReference type="ChEBI" id="CHEBI:28938"/>
        <dbReference type="ChEBI" id="CHEBI:29991"/>
        <dbReference type="ChEBI" id="CHEBI:30616"/>
        <dbReference type="ChEBI" id="CHEBI:33019"/>
        <dbReference type="ChEBI" id="CHEBI:58048"/>
        <dbReference type="ChEBI" id="CHEBI:456215"/>
        <dbReference type="EC" id="6.3.1.1"/>
    </reaction>
</comment>
<comment type="pathway">
    <text evidence="1">Amino-acid biosynthesis; L-asparagine biosynthesis; L-asparagine from L-aspartate (ammonia route): step 1/1.</text>
</comment>
<comment type="subcellular location">
    <subcellularLocation>
        <location evidence="1">Cytoplasm</location>
    </subcellularLocation>
</comment>
<comment type="similarity">
    <text evidence="1">Belongs to the class-II aminoacyl-tRNA synthetase family. AsnA subfamily.</text>
</comment>
<organism>
    <name type="scientific">Escherichia coli O127:H6 (strain E2348/69 / EPEC)</name>
    <dbReference type="NCBI Taxonomy" id="574521"/>
    <lineage>
        <taxon>Bacteria</taxon>
        <taxon>Pseudomonadati</taxon>
        <taxon>Pseudomonadota</taxon>
        <taxon>Gammaproteobacteria</taxon>
        <taxon>Enterobacterales</taxon>
        <taxon>Enterobacteriaceae</taxon>
        <taxon>Escherichia</taxon>
    </lineage>
</organism>
<reference key="1">
    <citation type="journal article" date="2009" name="J. Bacteriol.">
        <title>Complete genome sequence and comparative genome analysis of enteropathogenic Escherichia coli O127:H6 strain E2348/69.</title>
        <authorList>
            <person name="Iguchi A."/>
            <person name="Thomson N.R."/>
            <person name="Ogura Y."/>
            <person name="Saunders D."/>
            <person name="Ooka T."/>
            <person name="Henderson I.R."/>
            <person name="Harris D."/>
            <person name="Asadulghani M."/>
            <person name="Kurokawa K."/>
            <person name="Dean P."/>
            <person name="Kenny B."/>
            <person name="Quail M.A."/>
            <person name="Thurston S."/>
            <person name="Dougan G."/>
            <person name="Hayashi T."/>
            <person name="Parkhill J."/>
            <person name="Frankel G."/>
        </authorList>
    </citation>
    <scope>NUCLEOTIDE SEQUENCE [LARGE SCALE GENOMIC DNA]</scope>
    <source>
        <strain>E2348/69 / EPEC</strain>
    </source>
</reference>